<gene>
    <name type="primary">usp103</name>
    <name type="synonym">yhc1</name>
    <name type="ORF">SPBP35G2.09</name>
</gene>
<sequence>MPRYLCDYCQVWLTHDSQSVRKAHNAGRAHIQNVQDYYTKVAQEEAQKQLEERASSGFLKKGNGSLDLPYAYAFPPKYNVFNLGCPPPPYIVSANTYMAPKGMNAMNAAAFVPMMPAVNLTNQVAFSAPQTTASSNTQLTQQQQSLPQTNEHQRARTHSNANNHFTKTHHQGQRSHQRFVRA</sequence>
<accession>Q9P794</accession>
<proteinExistence type="evidence at protein level"/>
<feature type="chain" id="PRO_0000363373" description="U1 small nuclear ribonucleoprotein C">
    <location>
        <begin position="1"/>
        <end position="182"/>
    </location>
</feature>
<feature type="zinc finger region" description="Matrin-type" evidence="1">
    <location>
        <begin position="4"/>
        <end position="36"/>
    </location>
</feature>
<feature type="region of interest" description="Disordered" evidence="2">
    <location>
        <begin position="129"/>
        <end position="182"/>
    </location>
</feature>
<feature type="compositionally biased region" description="Low complexity" evidence="2">
    <location>
        <begin position="130"/>
        <end position="150"/>
    </location>
</feature>
<feature type="compositionally biased region" description="Basic residues" evidence="2">
    <location>
        <begin position="166"/>
        <end position="182"/>
    </location>
</feature>
<organism>
    <name type="scientific">Schizosaccharomyces pombe (strain 972 / ATCC 24843)</name>
    <name type="common">Fission yeast</name>
    <dbReference type="NCBI Taxonomy" id="284812"/>
    <lineage>
        <taxon>Eukaryota</taxon>
        <taxon>Fungi</taxon>
        <taxon>Dikarya</taxon>
        <taxon>Ascomycota</taxon>
        <taxon>Taphrinomycotina</taxon>
        <taxon>Schizosaccharomycetes</taxon>
        <taxon>Schizosaccharomycetales</taxon>
        <taxon>Schizosaccharomycetaceae</taxon>
        <taxon>Schizosaccharomyces</taxon>
    </lineage>
</organism>
<dbReference type="EMBL" id="CU329671">
    <property type="protein sequence ID" value="CAB87371.1"/>
    <property type="molecule type" value="Genomic_DNA"/>
</dbReference>
<dbReference type="RefSeq" id="NP_595384.1">
    <property type="nucleotide sequence ID" value="NM_001021291.2"/>
</dbReference>
<dbReference type="SMR" id="Q9P794"/>
<dbReference type="BioGRID" id="277802">
    <property type="interactions" value="13"/>
</dbReference>
<dbReference type="FunCoup" id="Q9P794">
    <property type="interactions" value="95"/>
</dbReference>
<dbReference type="STRING" id="284812.Q9P794"/>
<dbReference type="iPTMnet" id="Q9P794"/>
<dbReference type="PaxDb" id="4896-SPBP35G2.09.1"/>
<dbReference type="EnsemblFungi" id="SPBP35G2.09.1">
    <property type="protein sequence ID" value="SPBP35G2.09.1:pep"/>
    <property type="gene ID" value="SPBP35G2.09"/>
</dbReference>
<dbReference type="GeneID" id="2541289"/>
<dbReference type="KEGG" id="spo:2541289"/>
<dbReference type="PomBase" id="SPBP35G2.09">
    <property type="gene designation" value="usp103"/>
</dbReference>
<dbReference type="VEuPathDB" id="FungiDB:SPBP35G2.09"/>
<dbReference type="eggNOG" id="KOG3454">
    <property type="taxonomic scope" value="Eukaryota"/>
</dbReference>
<dbReference type="HOGENOM" id="CLU_079697_4_0_1"/>
<dbReference type="InParanoid" id="Q9P794"/>
<dbReference type="PRO" id="PR:Q9P794"/>
<dbReference type="Proteomes" id="UP000002485">
    <property type="component" value="Chromosome II"/>
</dbReference>
<dbReference type="GO" id="GO:0000243">
    <property type="term" value="C:commitment complex"/>
    <property type="evidence" value="ECO:0000266"/>
    <property type="project" value="PomBase"/>
</dbReference>
<dbReference type="GO" id="GO:0005829">
    <property type="term" value="C:cytosol"/>
    <property type="evidence" value="ECO:0007005"/>
    <property type="project" value="PomBase"/>
</dbReference>
<dbReference type="GO" id="GO:0005634">
    <property type="term" value="C:nucleus"/>
    <property type="evidence" value="ECO:0007005"/>
    <property type="project" value="PomBase"/>
</dbReference>
<dbReference type="GO" id="GO:0005685">
    <property type="term" value="C:U1 snRNP"/>
    <property type="evidence" value="ECO:0000314"/>
    <property type="project" value="PomBase"/>
</dbReference>
<dbReference type="GO" id="GO:0071004">
    <property type="term" value="C:U2-type prespliceosome"/>
    <property type="evidence" value="ECO:0000266"/>
    <property type="project" value="PomBase"/>
</dbReference>
<dbReference type="GO" id="GO:0003729">
    <property type="term" value="F:mRNA binding"/>
    <property type="evidence" value="ECO:0000266"/>
    <property type="project" value="PomBase"/>
</dbReference>
<dbReference type="GO" id="GO:0030627">
    <property type="term" value="F:pre-mRNA 5'-splice site binding"/>
    <property type="evidence" value="ECO:0000318"/>
    <property type="project" value="GO_Central"/>
</dbReference>
<dbReference type="GO" id="GO:0030619">
    <property type="term" value="F:U1 snRNA binding"/>
    <property type="evidence" value="ECO:0007669"/>
    <property type="project" value="UniProtKB-UniRule"/>
</dbReference>
<dbReference type="GO" id="GO:0008270">
    <property type="term" value="F:zinc ion binding"/>
    <property type="evidence" value="ECO:0007669"/>
    <property type="project" value="UniProtKB-UniRule"/>
</dbReference>
<dbReference type="GO" id="GO:0000395">
    <property type="term" value="P:mRNA 5'-splice site recognition"/>
    <property type="evidence" value="ECO:0000318"/>
    <property type="project" value="GO_Central"/>
</dbReference>
<dbReference type="GO" id="GO:0000387">
    <property type="term" value="P:spliceosomal snRNP assembly"/>
    <property type="evidence" value="ECO:0007669"/>
    <property type="project" value="UniProtKB-UniRule"/>
</dbReference>
<dbReference type="FunFam" id="3.30.160.60:FF:000890">
    <property type="entry name" value="U1 small nuclear ribonucleoprotein C"/>
    <property type="match status" value="1"/>
</dbReference>
<dbReference type="Gene3D" id="3.30.160.60">
    <property type="entry name" value="Classic Zinc Finger"/>
    <property type="match status" value="1"/>
</dbReference>
<dbReference type="HAMAP" id="MF_03153">
    <property type="entry name" value="U1_C"/>
    <property type="match status" value="1"/>
</dbReference>
<dbReference type="InterPro" id="IPR000690">
    <property type="entry name" value="Matrin/U1-C_Znf_C2H2"/>
</dbReference>
<dbReference type="InterPro" id="IPR003604">
    <property type="entry name" value="Matrin/U1-like-C_Znf_C2H2"/>
</dbReference>
<dbReference type="InterPro" id="IPR013085">
    <property type="entry name" value="U1-CZ_Znf_C2H2"/>
</dbReference>
<dbReference type="InterPro" id="IPR017340">
    <property type="entry name" value="U1_snRNP-C"/>
</dbReference>
<dbReference type="InterPro" id="IPR036236">
    <property type="entry name" value="Znf_C2H2_sf"/>
</dbReference>
<dbReference type="PANTHER" id="PTHR31148">
    <property type="entry name" value="U1 SMALL NUCLEAR RIBONUCLEOPROTEIN C"/>
    <property type="match status" value="1"/>
</dbReference>
<dbReference type="PANTHER" id="PTHR31148:SF1">
    <property type="entry name" value="U1 SMALL NUCLEAR RIBONUCLEOPROTEIN C"/>
    <property type="match status" value="1"/>
</dbReference>
<dbReference type="Pfam" id="PF06220">
    <property type="entry name" value="zf-U1"/>
    <property type="match status" value="1"/>
</dbReference>
<dbReference type="PIRSF" id="PIRSF037969">
    <property type="entry name" value="U1_snRNP-C"/>
    <property type="match status" value="1"/>
</dbReference>
<dbReference type="SMART" id="SM00451">
    <property type="entry name" value="ZnF_U1"/>
    <property type="match status" value="1"/>
</dbReference>
<dbReference type="SUPFAM" id="SSF57667">
    <property type="entry name" value="beta-beta-alpha zinc fingers"/>
    <property type="match status" value="1"/>
</dbReference>
<dbReference type="PROSITE" id="PS50171">
    <property type="entry name" value="ZF_MATRIN"/>
    <property type="match status" value="1"/>
</dbReference>
<comment type="function">
    <text evidence="4">Component of the spliceosomal U1 snRNP, which is essential for recognition of the pre-mRNA 5' splice-site and the subsequent assembly of the spliceosome. usp103/U1-C is directly involved in initial 5' splice-site recognition for both constitutive and regulated alternative splicing. The interaction with the 5' splice-site seems to precede base-pairing between the pre-mRNA and the U1 snRNA. Stimulates commitment or early (E) complex formation by stabilizing the base pairing of the 5' end of the U1 snRNA and the 5' splice-site region.</text>
</comment>
<comment type="subunit">
    <text evidence="4">U1 snRNP is composed of the 7 core Sm proteins smb1, smd1, smd2, smd3, sme1, smf1 and smg1 (Sm proteins B, D1, D2, D3, E, F and G, respectively) that assemble in a heptameric protein ring on the Sm site of the small nuclear RNA to form the core snRNP, and at least 9 U1 snRNP-specific proteins usp101/U1-70K, usp102/U1-A, usp103/U1-C, usp106/LUC7, usp105/PRP39, usp104/PRP40, usp107/U1-H, usp108/U1-J and usp109/U1-L. usp103/U1-C interacts with U1 snRNA and the 5' splice-site region of the pre-mRNA.</text>
</comment>
<comment type="subcellular location">
    <subcellularLocation>
        <location evidence="1 3">Nucleus</location>
    </subcellularLocation>
</comment>
<comment type="similarity">
    <text evidence="1">Belongs to the U1 small nuclear ribonucleoprotein C family.</text>
</comment>
<evidence type="ECO:0000255" key="1">
    <source>
        <dbReference type="HAMAP-Rule" id="MF_03153"/>
    </source>
</evidence>
<evidence type="ECO:0000256" key="2">
    <source>
        <dbReference type="SAM" id="MobiDB-lite"/>
    </source>
</evidence>
<evidence type="ECO:0000269" key="3">
    <source>
    </source>
</evidence>
<evidence type="ECO:0000269" key="4">
    <source>
    </source>
</evidence>
<protein>
    <recommendedName>
        <fullName evidence="1">U1 small nuclear ribonucleoprotein C</fullName>
        <shortName evidence="1">U1 snRNP C</shortName>
        <shortName evidence="1">U1-C</shortName>
        <shortName evidence="1">U1C</shortName>
    </recommendedName>
</protein>
<name>RU1C_SCHPO</name>
<reference key="1">
    <citation type="journal article" date="2002" name="Nature">
        <title>The genome sequence of Schizosaccharomyces pombe.</title>
        <authorList>
            <person name="Wood V."/>
            <person name="Gwilliam R."/>
            <person name="Rajandream M.A."/>
            <person name="Lyne M.H."/>
            <person name="Lyne R."/>
            <person name="Stewart A."/>
            <person name="Sgouros J.G."/>
            <person name="Peat N."/>
            <person name="Hayles J."/>
            <person name="Baker S.G."/>
            <person name="Basham D."/>
            <person name="Bowman S."/>
            <person name="Brooks K."/>
            <person name="Brown D."/>
            <person name="Brown S."/>
            <person name="Chillingworth T."/>
            <person name="Churcher C.M."/>
            <person name="Collins M."/>
            <person name="Connor R."/>
            <person name="Cronin A."/>
            <person name="Davis P."/>
            <person name="Feltwell T."/>
            <person name="Fraser A."/>
            <person name="Gentles S."/>
            <person name="Goble A."/>
            <person name="Hamlin N."/>
            <person name="Harris D.E."/>
            <person name="Hidalgo J."/>
            <person name="Hodgson G."/>
            <person name="Holroyd S."/>
            <person name="Hornsby T."/>
            <person name="Howarth S."/>
            <person name="Huckle E.J."/>
            <person name="Hunt S."/>
            <person name="Jagels K."/>
            <person name="James K.D."/>
            <person name="Jones L."/>
            <person name="Jones M."/>
            <person name="Leather S."/>
            <person name="McDonald S."/>
            <person name="McLean J."/>
            <person name="Mooney P."/>
            <person name="Moule S."/>
            <person name="Mungall K.L."/>
            <person name="Murphy L.D."/>
            <person name="Niblett D."/>
            <person name="Odell C."/>
            <person name="Oliver K."/>
            <person name="O'Neil S."/>
            <person name="Pearson D."/>
            <person name="Quail M.A."/>
            <person name="Rabbinowitsch E."/>
            <person name="Rutherford K.M."/>
            <person name="Rutter S."/>
            <person name="Saunders D."/>
            <person name="Seeger K."/>
            <person name="Sharp S."/>
            <person name="Skelton J."/>
            <person name="Simmonds M.N."/>
            <person name="Squares R."/>
            <person name="Squares S."/>
            <person name="Stevens K."/>
            <person name="Taylor K."/>
            <person name="Taylor R.G."/>
            <person name="Tivey A."/>
            <person name="Walsh S.V."/>
            <person name="Warren T."/>
            <person name="Whitehead S."/>
            <person name="Woodward J.R."/>
            <person name="Volckaert G."/>
            <person name="Aert R."/>
            <person name="Robben J."/>
            <person name="Grymonprez B."/>
            <person name="Weltjens I."/>
            <person name="Vanstreels E."/>
            <person name="Rieger M."/>
            <person name="Schaefer M."/>
            <person name="Mueller-Auer S."/>
            <person name="Gabel C."/>
            <person name="Fuchs M."/>
            <person name="Duesterhoeft A."/>
            <person name="Fritzc C."/>
            <person name="Holzer E."/>
            <person name="Moestl D."/>
            <person name="Hilbert H."/>
            <person name="Borzym K."/>
            <person name="Langer I."/>
            <person name="Beck A."/>
            <person name="Lehrach H."/>
            <person name="Reinhardt R."/>
            <person name="Pohl T.M."/>
            <person name="Eger P."/>
            <person name="Zimmermann W."/>
            <person name="Wedler H."/>
            <person name="Wambutt R."/>
            <person name="Purnelle B."/>
            <person name="Goffeau A."/>
            <person name="Cadieu E."/>
            <person name="Dreano S."/>
            <person name="Gloux S."/>
            <person name="Lelaure V."/>
            <person name="Mottier S."/>
            <person name="Galibert F."/>
            <person name="Aves S.J."/>
            <person name="Xiang Z."/>
            <person name="Hunt C."/>
            <person name="Moore K."/>
            <person name="Hurst S.M."/>
            <person name="Lucas M."/>
            <person name="Rochet M."/>
            <person name="Gaillardin C."/>
            <person name="Tallada V.A."/>
            <person name="Garzon A."/>
            <person name="Thode G."/>
            <person name="Daga R.R."/>
            <person name="Cruzado L."/>
            <person name="Jimenez J."/>
            <person name="Sanchez M."/>
            <person name="del Rey F."/>
            <person name="Benito J."/>
            <person name="Dominguez A."/>
            <person name="Revuelta J.L."/>
            <person name="Moreno S."/>
            <person name="Armstrong J."/>
            <person name="Forsburg S.L."/>
            <person name="Cerutti L."/>
            <person name="Lowe T."/>
            <person name="McCombie W.R."/>
            <person name="Paulsen I."/>
            <person name="Potashkin J."/>
            <person name="Shpakovski G.V."/>
            <person name="Ussery D."/>
            <person name="Barrell B.G."/>
            <person name="Nurse P."/>
        </authorList>
    </citation>
    <scope>NUCLEOTIDE SEQUENCE [LARGE SCALE GENOMIC DNA]</scope>
    <source>
        <strain>972 / ATCC 24843</strain>
    </source>
</reference>
<reference key="2">
    <citation type="journal article" date="2006" name="Nat. Biotechnol.">
        <title>ORFeome cloning and global analysis of protein localization in the fission yeast Schizosaccharomyces pombe.</title>
        <authorList>
            <person name="Matsuyama A."/>
            <person name="Arai R."/>
            <person name="Yashiroda Y."/>
            <person name="Shirai A."/>
            <person name="Kamata A."/>
            <person name="Sekido S."/>
            <person name="Kobayashi Y."/>
            <person name="Hashimoto A."/>
            <person name="Hamamoto M."/>
            <person name="Hiraoka Y."/>
            <person name="Horinouchi S."/>
            <person name="Yoshida M."/>
        </authorList>
    </citation>
    <scope>SUBCELLULAR LOCATION [LARGE SCALE ANALYSIS]</scope>
</reference>
<reference key="3">
    <citation type="journal article" date="2007" name="Nucleic Acids Res.">
        <title>Proteomic analysis of the U1 snRNP of Schizosaccharomyces pombe reveals three essential organism-specific proteins.</title>
        <authorList>
            <person name="Newo A.N.S."/>
            <person name="Luetzelberger M."/>
            <person name="Bottner C.A."/>
            <person name="Wehland J."/>
            <person name="Wissing J."/>
            <person name="Jaensch L."/>
            <person name="Kaeufer N.F."/>
        </authorList>
    </citation>
    <scope>FUNCTION</scope>
    <scope>IDENTIFICATION IN U1 SNRNP COMPLEX</scope>
    <scope>IDENTIFICATION BY MASS SPECTROMETRY</scope>
</reference>
<keyword id="KW-0479">Metal-binding</keyword>
<keyword id="KW-0539">Nucleus</keyword>
<keyword id="KW-1185">Reference proteome</keyword>
<keyword id="KW-0687">Ribonucleoprotein</keyword>
<keyword id="KW-0694">RNA-binding</keyword>
<keyword id="KW-0862">Zinc</keyword>
<keyword id="KW-0863">Zinc-finger</keyword>